<keyword id="KW-0997">Cell inner membrane</keyword>
<keyword id="KW-1003">Cell membrane</keyword>
<keyword id="KW-0406">Ion transport</keyword>
<keyword id="KW-0472">Membrane</keyword>
<keyword id="KW-0630">Potassium</keyword>
<keyword id="KW-0633">Potassium transport</keyword>
<keyword id="KW-1185">Reference proteome</keyword>
<keyword id="KW-0769">Symport</keyword>
<keyword id="KW-0812">Transmembrane</keyword>
<keyword id="KW-1133">Transmembrane helix</keyword>
<keyword id="KW-0813">Transport</keyword>
<sequence>MKKHTESYWEGVVKSMGLVFGDIGTSPIYTLTVIFALTKPTEANVFGILSMVVWTLIILVTVEYAWLAMSLGRKGEGGTIVLKEILIRLLKPGRQIAFVGFLSFVGVSLLLGDGVITPAISILSAVEGLVLIPGLESMRLGTLILIAALIAVVLFIFQFKGTDKVAAAFGPLMVLWFGALTVSGLVSIATFPKILGAVSPHYAINFFRDNGISAFFVLSEVILCATGGEALYADMGHLGRRPIIRAWYFVFVALIINYLGQGAFALQHGDAKNFLFNMVQGQSQLLYIPFLILTILATVIASQALISGVFSIVYQGITTRIMPLMKVDYTSSHLKSQIYIGSVNWFLMLLVIFIMLIFQKSENLAAAYGLAVTGTMTITGIMMTIIFAHTTKKWKVPVAVAVTIVDVVFLISNLNKLPHGGYWSIILASVPFATILIWTKGQQALYRALKPLDMETFLLSYEQIYAKGKNITGTGLFFTREWNVIPPYVVHCIIRSNIIYERNIFISIVRTDEPFGLKSELKTGFGPGLDAFEIKAGYMEVIDIEKLLKKHDIQEKVIFYGIEDIATMNPVWRVFSVIKKLTPNFVQFNKLPASKLQGVVTRVEM</sequence>
<comment type="function">
    <text evidence="1">Transport of potassium into the cell. Likely operates as a K(+):H(+) symporter.</text>
</comment>
<comment type="catalytic activity">
    <reaction evidence="1">
        <text>K(+)(in) + H(+)(in) = K(+)(out) + H(+)(out)</text>
        <dbReference type="Rhea" id="RHEA:28490"/>
        <dbReference type="ChEBI" id="CHEBI:15378"/>
        <dbReference type="ChEBI" id="CHEBI:29103"/>
    </reaction>
    <physiologicalReaction direction="right-to-left" evidence="1">
        <dbReference type="Rhea" id="RHEA:28492"/>
    </physiologicalReaction>
</comment>
<comment type="subcellular location">
    <subcellularLocation>
        <location evidence="1">Cell inner membrane</location>
        <topology evidence="1">Multi-pass membrane protein</topology>
    </subcellularLocation>
</comment>
<comment type="similarity">
    <text evidence="1">Belongs to the HAK/KUP transporter (TC 2.A.72) family.</text>
</comment>
<protein>
    <recommendedName>
        <fullName evidence="1">Probable potassium transport system protein Kup</fullName>
    </recommendedName>
</protein>
<proteinExistence type="inferred from homology"/>
<gene>
    <name evidence="1" type="primary">kup</name>
    <name type="ordered locus">Gura_4312</name>
</gene>
<dbReference type="EMBL" id="CP000698">
    <property type="protein sequence ID" value="ABQ28455.1"/>
    <property type="molecule type" value="Genomic_DNA"/>
</dbReference>
<dbReference type="RefSeq" id="WP_011941085.1">
    <property type="nucleotide sequence ID" value="NC_009483.1"/>
</dbReference>
<dbReference type="STRING" id="351605.Gura_4312"/>
<dbReference type="KEGG" id="gur:Gura_4312"/>
<dbReference type="HOGENOM" id="CLU_008142_4_2_7"/>
<dbReference type="OrthoDB" id="9805577at2"/>
<dbReference type="Proteomes" id="UP000006695">
    <property type="component" value="Chromosome"/>
</dbReference>
<dbReference type="GO" id="GO:0005886">
    <property type="term" value="C:plasma membrane"/>
    <property type="evidence" value="ECO:0007669"/>
    <property type="project" value="UniProtKB-SubCell"/>
</dbReference>
<dbReference type="GO" id="GO:0015079">
    <property type="term" value="F:potassium ion transmembrane transporter activity"/>
    <property type="evidence" value="ECO:0007669"/>
    <property type="project" value="UniProtKB-UniRule"/>
</dbReference>
<dbReference type="GO" id="GO:0015293">
    <property type="term" value="F:symporter activity"/>
    <property type="evidence" value="ECO:0007669"/>
    <property type="project" value="UniProtKB-UniRule"/>
</dbReference>
<dbReference type="HAMAP" id="MF_01522">
    <property type="entry name" value="Kup"/>
    <property type="match status" value="1"/>
</dbReference>
<dbReference type="InterPro" id="IPR003855">
    <property type="entry name" value="K+_transporter"/>
</dbReference>
<dbReference type="InterPro" id="IPR053952">
    <property type="entry name" value="K_trans_C"/>
</dbReference>
<dbReference type="InterPro" id="IPR053951">
    <property type="entry name" value="K_trans_N"/>
</dbReference>
<dbReference type="InterPro" id="IPR023051">
    <property type="entry name" value="Kup"/>
</dbReference>
<dbReference type="PANTHER" id="PTHR30540:SF83">
    <property type="entry name" value="K+ POTASSIUM TRANSPORTER"/>
    <property type="match status" value="1"/>
</dbReference>
<dbReference type="PANTHER" id="PTHR30540">
    <property type="entry name" value="OSMOTIC STRESS POTASSIUM TRANSPORTER"/>
    <property type="match status" value="1"/>
</dbReference>
<dbReference type="Pfam" id="PF02705">
    <property type="entry name" value="K_trans"/>
    <property type="match status" value="1"/>
</dbReference>
<dbReference type="Pfam" id="PF22776">
    <property type="entry name" value="K_trans_C"/>
    <property type="match status" value="1"/>
</dbReference>
<name>KUP_GEOUR</name>
<accession>A5G9I7</accession>
<reference key="1">
    <citation type="submission" date="2007-05" db="EMBL/GenBank/DDBJ databases">
        <title>Complete sequence of Geobacter uraniireducens Rf4.</title>
        <authorList>
            <consortium name="US DOE Joint Genome Institute"/>
            <person name="Copeland A."/>
            <person name="Lucas S."/>
            <person name="Lapidus A."/>
            <person name="Barry K."/>
            <person name="Detter J.C."/>
            <person name="Glavina del Rio T."/>
            <person name="Hammon N."/>
            <person name="Israni S."/>
            <person name="Dalin E."/>
            <person name="Tice H."/>
            <person name="Pitluck S."/>
            <person name="Chertkov O."/>
            <person name="Brettin T."/>
            <person name="Bruce D."/>
            <person name="Han C."/>
            <person name="Schmutz J."/>
            <person name="Larimer F."/>
            <person name="Land M."/>
            <person name="Hauser L."/>
            <person name="Kyrpides N."/>
            <person name="Mikhailova N."/>
            <person name="Shelobolina E."/>
            <person name="Aklujkar M."/>
            <person name="Lovley D."/>
            <person name="Richardson P."/>
        </authorList>
    </citation>
    <scope>NUCLEOTIDE SEQUENCE [LARGE SCALE GENOMIC DNA]</scope>
    <source>
        <strain>ATCC BAA-1134 / JCM 13001 / Rf4</strain>
    </source>
</reference>
<organism>
    <name type="scientific">Geotalea uraniireducens (strain Rf4)</name>
    <name type="common">Geobacter uraniireducens</name>
    <dbReference type="NCBI Taxonomy" id="351605"/>
    <lineage>
        <taxon>Bacteria</taxon>
        <taxon>Pseudomonadati</taxon>
        <taxon>Thermodesulfobacteriota</taxon>
        <taxon>Desulfuromonadia</taxon>
        <taxon>Geobacterales</taxon>
        <taxon>Geobacteraceae</taxon>
        <taxon>Geotalea</taxon>
    </lineage>
</organism>
<evidence type="ECO:0000255" key="1">
    <source>
        <dbReference type="HAMAP-Rule" id="MF_01522"/>
    </source>
</evidence>
<feature type="chain" id="PRO_0000333308" description="Probable potassium transport system protein Kup">
    <location>
        <begin position="1"/>
        <end position="605"/>
    </location>
</feature>
<feature type="transmembrane region" description="Helical" evidence="1">
    <location>
        <begin position="17"/>
        <end position="37"/>
    </location>
</feature>
<feature type="transmembrane region" description="Helical" evidence="1">
    <location>
        <begin position="45"/>
        <end position="65"/>
    </location>
</feature>
<feature type="transmembrane region" description="Helical" evidence="1">
    <location>
        <begin position="96"/>
        <end position="116"/>
    </location>
</feature>
<feature type="transmembrane region" description="Helical" evidence="1">
    <location>
        <begin position="140"/>
        <end position="160"/>
    </location>
</feature>
<feature type="transmembrane region" description="Helical" evidence="1">
    <location>
        <begin position="165"/>
        <end position="185"/>
    </location>
</feature>
<feature type="transmembrane region" description="Helical" evidence="1">
    <location>
        <begin position="211"/>
        <end position="231"/>
    </location>
</feature>
<feature type="transmembrane region" description="Helical" evidence="1">
    <location>
        <begin position="246"/>
        <end position="266"/>
    </location>
</feature>
<feature type="transmembrane region" description="Helical" evidence="1">
    <location>
        <begin position="286"/>
        <end position="306"/>
    </location>
</feature>
<feature type="transmembrane region" description="Helical" evidence="1">
    <location>
        <begin position="338"/>
        <end position="358"/>
    </location>
</feature>
<feature type="transmembrane region" description="Helical" evidence="1">
    <location>
        <begin position="367"/>
        <end position="387"/>
    </location>
</feature>
<feature type="transmembrane region" description="Helical" evidence="1">
    <location>
        <begin position="394"/>
        <end position="414"/>
    </location>
</feature>
<feature type="transmembrane region" description="Helical" evidence="1">
    <location>
        <begin position="417"/>
        <end position="437"/>
    </location>
</feature>